<protein>
    <recommendedName>
        <fullName evidence="1">4-diphosphocytidyl-2-C-methyl-D-erythritol kinase</fullName>
        <shortName evidence="1">CMK</shortName>
        <ecNumber evidence="1">2.7.1.148</ecNumber>
    </recommendedName>
    <alternativeName>
        <fullName evidence="1">4-(cytidine-5'-diphospho)-2-C-methyl-D-erythritol kinase</fullName>
    </alternativeName>
</protein>
<feature type="chain" id="PRO_1000092120" description="4-diphosphocytidyl-2-C-methyl-D-erythritol kinase">
    <location>
        <begin position="1"/>
        <end position="285"/>
    </location>
</feature>
<feature type="active site" evidence="1">
    <location>
        <position position="9"/>
    </location>
</feature>
<feature type="active site" evidence="1">
    <location>
        <position position="131"/>
    </location>
</feature>
<feature type="binding site" evidence="1">
    <location>
        <begin position="89"/>
        <end position="99"/>
    </location>
    <ligand>
        <name>ATP</name>
        <dbReference type="ChEBI" id="CHEBI:30616"/>
    </ligand>
</feature>
<accession>B5YG57</accession>
<dbReference type="EC" id="2.7.1.148" evidence="1"/>
<dbReference type="EMBL" id="CP001147">
    <property type="protein sequence ID" value="ACI20733.1"/>
    <property type="molecule type" value="Genomic_DNA"/>
</dbReference>
<dbReference type="RefSeq" id="WP_012545467.1">
    <property type="nucleotide sequence ID" value="NC_011296.1"/>
</dbReference>
<dbReference type="RefSeq" id="YP_002249255.1">
    <property type="nucleotide sequence ID" value="NC_011296.1"/>
</dbReference>
<dbReference type="SMR" id="B5YG57"/>
<dbReference type="FunCoup" id="B5YG57">
    <property type="interactions" value="265"/>
</dbReference>
<dbReference type="STRING" id="289376.THEYE_A1457"/>
<dbReference type="EnsemblBacteria" id="ACI20733">
    <property type="protein sequence ID" value="ACI20733"/>
    <property type="gene ID" value="THEYE_A1457"/>
</dbReference>
<dbReference type="KEGG" id="tye:THEYE_A1457"/>
<dbReference type="PATRIC" id="fig|289376.4.peg.1417"/>
<dbReference type="eggNOG" id="COG1947">
    <property type="taxonomic scope" value="Bacteria"/>
</dbReference>
<dbReference type="HOGENOM" id="CLU_053057_2_0_0"/>
<dbReference type="InParanoid" id="B5YG57"/>
<dbReference type="OrthoDB" id="9809438at2"/>
<dbReference type="UniPathway" id="UPA00056">
    <property type="reaction ID" value="UER00094"/>
</dbReference>
<dbReference type="Proteomes" id="UP000000718">
    <property type="component" value="Chromosome"/>
</dbReference>
<dbReference type="GO" id="GO:0050515">
    <property type="term" value="F:4-(cytidine 5'-diphospho)-2-C-methyl-D-erythritol kinase activity"/>
    <property type="evidence" value="ECO:0000318"/>
    <property type="project" value="GO_Central"/>
</dbReference>
<dbReference type="GO" id="GO:0005524">
    <property type="term" value="F:ATP binding"/>
    <property type="evidence" value="ECO:0007669"/>
    <property type="project" value="UniProtKB-UniRule"/>
</dbReference>
<dbReference type="GO" id="GO:0019288">
    <property type="term" value="P:isopentenyl diphosphate biosynthetic process, methylerythritol 4-phosphate pathway"/>
    <property type="evidence" value="ECO:0007669"/>
    <property type="project" value="UniProtKB-UniRule"/>
</dbReference>
<dbReference type="GO" id="GO:0016114">
    <property type="term" value="P:terpenoid biosynthetic process"/>
    <property type="evidence" value="ECO:0007669"/>
    <property type="project" value="InterPro"/>
</dbReference>
<dbReference type="Gene3D" id="3.30.230.10">
    <property type="match status" value="1"/>
</dbReference>
<dbReference type="Gene3D" id="3.30.70.890">
    <property type="entry name" value="GHMP kinase, C-terminal domain"/>
    <property type="match status" value="1"/>
</dbReference>
<dbReference type="HAMAP" id="MF_00061">
    <property type="entry name" value="IspE"/>
    <property type="match status" value="1"/>
</dbReference>
<dbReference type="InterPro" id="IPR013750">
    <property type="entry name" value="GHMP_kinase_C_dom"/>
</dbReference>
<dbReference type="InterPro" id="IPR036554">
    <property type="entry name" value="GHMP_kinase_C_sf"/>
</dbReference>
<dbReference type="InterPro" id="IPR006204">
    <property type="entry name" value="GHMP_kinase_N_dom"/>
</dbReference>
<dbReference type="InterPro" id="IPR004424">
    <property type="entry name" value="IspE"/>
</dbReference>
<dbReference type="InterPro" id="IPR020568">
    <property type="entry name" value="Ribosomal_Su5_D2-typ_SF"/>
</dbReference>
<dbReference type="InterPro" id="IPR014721">
    <property type="entry name" value="Ribsml_uS5_D2-typ_fold_subgr"/>
</dbReference>
<dbReference type="NCBIfam" id="TIGR00154">
    <property type="entry name" value="ispE"/>
    <property type="match status" value="1"/>
</dbReference>
<dbReference type="PANTHER" id="PTHR43527">
    <property type="entry name" value="4-DIPHOSPHOCYTIDYL-2-C-METHYL-D-ERYTHRITOL KINASE, CHLOROPLASTIC"/>
    <property type="match status" value="1"/>
</dbReference>
<dbReference type="PANTHER" id="PTHR43527:SF2">
    <property type="entry name" value="4-DIPHOSPHOCYTIDYL-2-C-METHYL-D-ERYTHRITOL KINASE, CHLOROPLASTIC"/>
    <property type="match status" value="1"/>
</dbReference>
<dbReference type="Pfam" id="PF08544">
    <property type="entry name" value="GHMP_kinases_C"/>
    <property type="match status" value="1"/>
</dbReference>
<dbReference type="Pfam" id="PF00288">
    <property type="entry name" value="GHMP_kinases_N"/>
    <property type="match status" value="1"/>
</dbReference>
<dbReference type="PIRSF" id="PIRSF010376">
    <property type="entry name" value="IspE"/>
    <property type="match status" value="1"/>
</dbReference>
<dbReference type="PRINTS" id="PR00958">
    <property type="entry name" value="HOMSERKINASE"/>
</dbReference>
<dbReference type="SUPFAM" id="SSF55060">
    <property type="entry name" value="GHMP Kinase, C-terminal domain"/>
    <property type="match status" value="1"/>
</dbReference>
<dbReference type="SUPFAM" id="SSF54211">
    <property type="entry name" value="Ribosomal protein S5 domain 2-like"/>
    <property type="match status" value="1"/>
</dbReference>
<keyword id="KW-0067">ATP-binding</keyword>
<keyword id="KW-0414">Isoprene biosynthesis</keyword>
<keyword id="KW-0418">Kinase</keyword>
<keyword id="KW-0547">Nucleotide-binding</keyword>
<keyword id="KW-1185">Reference proteome</keyword>
<keyword id="KW-0808">Transferase</keyword>
<proteinExistence type="inferred from homology"/>
<sequence length="285" mass="32180">MLTCKAFAKINWAISVLKKRDDGYHDIISLMQAIDLHDTLIFKSSQKIEIETDLLIKKENNLVYKAIKALQNYTGIKKGVTVILKKEIPLGAGLGGGSSDAATTLKALNELWQLNLDIKTLHEIGASIGSDIPFFFYLPICIVEGRGDVVKPLKISKSYTLLLVKPDFSISTEWAYKTLDLKTELTTEYEKINNNIWQLYNHLYSGDVDNFYLWNDLEKSVLEKYPEIDKIKRKLIEAGAKSSLLSGSGSTVFGLFNNKTDAQKALKFFEGYWCRVVQTLVEPLK</sequence>
<comment type="function">
    <text evidence="1">Catalyzes the phosphorylation of the position 2 hydroxy group of 4-diphosphocytidyl-2C-methyl-D-erythritol.</text>
</comment>
<comment type="catalytic activity">
    <reaction evidence="1">
        <text>4-CDP-2-C-methyl-D-erythritol + ATP = 4-CDP-2-C-methyl-D-erythritol 2-phosphate + ADP + H(+)</text>
        <dbReference type="Rhea" id="RHEA:18437"/>
        <dbReference type="ChEBI" id="CHEBI:15378"/>
        <dbReference type="ChEBI" id="CHEBI:30616"/>
        <dbReference type="ChEBI" id="CHEBI:57823"/>
        <dbReference type="ChEBI" id="CHEBI:57919"/>
        <dbReference type="ChEBI" id="CHEBI:456216"/>
        <dbReference type="EC" id="2.7.1.148"/>
    </reaction>
</comment>
<comment type="pathway">
    <text evidence="1">Isoprenoid biosynthesis; isopentenyl diphosphate biosynthesis via DXP pathway; isopentenyl diphosphate from 1-deoxy-D-xylulose 5-phosphate: step 3/6.</text>
</comment>
<comment type="similarity">
    <text evidence="1">Belongs to the GHMP kinase family. IspE subfamily.</text>
</comment>
<name>ISPE_THEYD</name>
<reference key="1">
    <citation type="submission" date="2008-08" db="EMBL/GenBank/DDBJ databases">
        <title>The complete genome sequence of Thermodesulfovibrio yellowstonii strain ATCC 51303 / DSM 11347 / YP87.</title>
        <authorList>
            <person name="Dodson R.J."/>
            <person name="Durkin A.S."/>
            <person name="Wu M."/>
            <person name="Eisen J."/>
            <person name="Sutton G."/>
        </authorList>
    </citation>
    <scope>NUCLEOTIDE SEQUENCE [LARGE SCALE GENOMIC DNA]</scope>
    <source>
        <strain>ATCC 51303 / DSM 11347 / YP87</strain>
    </source>
</reference>
<gene>
    <name evidence="1" type="primary">ispE</name>
    <name type="ordered locus">THEYE_A1457</name>
</gene>
<evidence type="ECO:0000255" key="1">
    <source>
        <dbReference type="HAMAP-Rule" id="MF_00061"/>
    </source>
</evidence>
<organism>
    <name type="scientific">Thermodesulfovibrio yellowstonii (strain ATCC 51303 / DSM 11347 / YP87)</name>
    <dbReference type="NCBI Taxonomy" id="289376"/>
    <lineage>
        <taxon>Bacteria</taxon>
        <taxon>Pseudomonadati</taxon>
        <taxon>Nitrospirota</taxon>
        <taxon>Thermodesulfovibrionia</taxon>
        <taxon>Thermodesulfovibrionales</taxon>
        <taxon>Thermodesulfovibrionaceae</taxon>
        <taxon>Thermodesulfovibrio</taxon>
    </lineage>
</organism>